<evidence type="ECO:0000255" key="1"/>
<evidence type="ECO:0000305" key="2"/>
<feature type="chain" id="PRO_0000077895" description="Uncharacterized protein HI_0173">
    <location>
        <begin position="1"/>
        <end position="86"/>
    </location>
</feature>
<feature type="transmembrane region" description="Helical" evidence="1">
    <location>
        <begin position="4"/>
        <end position="24"/>
    </location>
</feature>
<name>Y173_HAEIN</name>
<gene>
    <name type="ordered locus">HI_0173</name>
</gene>
<dbReference type="EMBL" id="L42023">
    <property type="protein sequence ID" value="AAC21846.1"/>
    <property type="molecule type" value="Genomic_DNA"/>
</dbReference>
<dbReference type="PIR" id="E64003">
    <property type="entry name" value="E64003"/>
</dbReference>
<dbReference type="RefSeq" id="NP_438341.1">
    <property type="nucleotide sequence ID" value="NC_000907.1"/>
</dbReference>
<dbReference type="SMR" id="P43960"/>
<dbReference type="STRING" id="71421.HI_0173"/>
<dbReference type="EnsemblBacteria" id="AAC21846">
    <property type="protein sequence ID" value="AAC21846"/>
    <property type="gene ID" value="HI_0173"/>
</dbReference>
<dbReference type="KEGG" id="hin:HI_0173"/>
<dbReference type="PATRIC" id="fig|71421.8.peg.177"/>
<dbReference type="eggNOG" id="COG2991">
    <property type="taxonomic scope" value="Bacteria"/>
</dbReference>
<dbReference type="HOGENOM" id="CLU_191465_0_0_6"/>
<dbReference type="OrthoDB" id="5296227at2"/>
<dbReference type="BioCyc" id="HINF71421:G1GJ1-183-MONOMER"/>
<dbReference type="Proteomes" id="UP000000579">
    <property type="component" value="Chromosome"/>
</dbReference>
<dbReference type="GO" id="GO:0016020">
    <property type="term" value="C:membrane"/>
    <property type="evidence" value="ECO:0007669"/>
    <property type="project" value="UniProtKB-SubCell"/>
</dbReference>
<dbReference type="InterPro" id="IPR007495">
    <property type="entry name" value="NqrM"/>
</dbReference>
<dbReference type="PANTHER" id="PTHR40691">
    <property type="entry name" value="(NA+)-NQR MATURATION NQRM"/>
    <property type="match status" value="1"/>
</dbReference>
<dbReference type="PANTHER" id="PTHR40691:SF1">
    <property type="entry name" value="EXPORTED PROTEIN"/>
    <property type="match status" value="1"/>
</dbReference>
<dbReference type="Pfam" id="PF04400">
    <property type="entry name" value="NqrM"/>
    <property type="match status" value="1"/>
</dbReference>
<keyword id="KW-0472">Membrane</keyword>
<keyword id="KW-1185">Reference proteome</keyword>
<keyword id="KW-0812">Transmembrane</keyword>
<keyword id="KW-1133">Transmembrane helix</keyword>
<sequence length="86" mass="9494">MQTLFFTLIAFVAIILLMSIGFIIKKQSLKGSCGGLSTLGIAKACDCDKPCDTHHSKLDAGDEQAKAEYEQKFAKKDDDSQFYQVK</sequence>
<organism>
    <name type="scientific">Haemophilus influenzae (strain ATCC 51907 / DSM 11121 / KW20 / Rd)</name>
    <dbReference type="NCBI Taxonomy" id="71421"/>
    <lineage>
        <taxon>Bacteria</taxon>
        <taxon>Pseudomonadati</taxon>
        <taxon>Pseudomonadota</taxon>
        <taxon>Gammaproteobacteria</taxon>
        <taxon>Pasteurellales</taxon>
        <taxon>Pasteurellaceae</taxon>
        <taxon>Haemophilus</taxon>
    </lineage>
</organism>
<proteinExistence type="predicted"/>
<protein>
    <recommendedName>
        <fullName>Uncharacterized protein HI_0173</fullName>
    </recommendedName>
</protein>
<comment type="subcellular location">
    <subcellularLocation>
        <location evidence="2">Membrane</location>
        <topology evidence="2">Single-pass membrane protein</topology>
    </subcellularLocation>
</comment>
<reference key="1">
    <citation type="journal article" date="1995" name="Science">
        <title>Whole-genome random sequencing and assembly of Haemophilus influenzae Rd.</title>
        <authorList>
            <person name="Fleischmann R.D."/>
            <person name="Adams M.D."/>
            <person name="White O."/>
            <person name="Clayton R.A."/>
            <person name="Kirkness E.F."/>
            <person name="Kerlavage A.R."/>
            <person name="Bult C.J."/>
            <person name="Tomb J.-F."/>
            <person name="Dougherty B.A."/>
            <person name="Merrick J.M."/>
            <person name="McKenney K."/>
            <person name="Sutton G.G."/>
            <person name="FitzHugh W."/>
            <person name="Fields C.A."/>
            <person name="Gocayne J.D."/>
            <person name="Scott J.D."/>
            <person name="Shirley R."/>
            <person name="Liu L.-I."/>
            <person name="Glodek A."/>
            <person name="Kelley J.M."/>
            <person name="Weidman J.F."/>
            <person name="Phillips C.A."/>
            <person name="Spriggs T."/>
            <person name="Hedblom E."/>
            <person name="Cotton M.D."/>
            <person name="Utterback T.R."/>
            <person name="Hanna M.C."/>
            <person name="Nguyen D.T."/>
            <person name="Saudek D.M."/>
            <person name="Brandon R.C."/>
            <person name="Fine L.D."/>
            <person name="Fritchman J.L."/>
            <person name="Fuhrmann J.L."/>
            <person name="Geoghagen N.S.M."/>
            <person name="Gnehm C.L."/>
            <person name="McDonald L.A."/>
            <person name="Small K.V."/>
            <person name="Fraser C.M."/>
            <person name="Smith H.O."/>
            <person name="Venter J.C."/>
        </authorList>
    </citation>
    <scope>NUCLEOTIDE SEQUENCE [LARGE SCALE GENOMIC DNA]</scope>
    <source>
        <strain>ATCC 51907 / DSM 11121 / KW20 / Rd</strain>
    </source>
</reference>
<accession>P43960</accession>